<comment type="function">
    <text evidence="1">Probably functions as a manganese efflux pump.</text>
</comment>
<comment type="subcellular location">
    <subcellularLocation>
        <location evidence="1">Cell inner membrane</location>
        <topology evidence="1">Multi-pass membrane protein</topology>
    </subcellularLocation>
</comment>
<comment type="similarity">
    <text evidence="1">Belongs to the MntP (TC 9.B.29) family.</text>
</comment>
<comment type="sequence caution" evidence="2">
    <conflict type="erroneous initiation">
        <sequence resource="EMBL-CDS" id="ABJ01179"/>
    </conflict>
</comment>
<dbReference type="EMBL" id="CP000468">
    <property type="protein sequence ID" value="ABJ01179.1"/>
    <property type="status" value="ALT_INIT"/>
    <property type="molecule type" value="Genomic_DNA"/>
</dbReference>
<dbReference type="RefSeq" id="WP_001296134.1">
    <property type="nucleotide sequence ID" value="NZ_CADILS010000034.1"/>
</dbReference>
<dbReference type="GeneID" id="93776070"/>
<dbReference type="KEGG" id="ecv:APECO1_878"/>
<dbReference type="HOGENOM" id="CLU_096410_0_0_6"/>
<dbReference type="Proteomes" id="UP000008216">
    <property type="component" value="Chromosome"/>
</dbReference>
<dbReference type="GO" id="GO:0005886">
    <property type="term" value="C:plasma membrane"/>
    <property type="evidence" value="ECO:0007669"/>
    <property type="project" value="UniProtKB-SubCell"/>
</dbReference>
<dbReference type="GO" id="GO:0005384">
    <property type="term" value="F:manganese ion transmembrane transporter activity"/>
    <property type="evidence" value="ECO:0007669"/>
    <property type="project" value="UniProtKB-UniRule"/>
</dbReference>
<dbReference type="HAMAP" id="MF_01521">
    <property type="entry name" value="MntP_pump"/>
    <property type="match status" value="1"/>
</dbReference>
<dbReference type="InterPro" id="IPR003810">
    <property type="entry name" value="Mntp/YtaF"/>
</dbReference>
<dbReference type="InterPro" id="IPR022929">
    <property type="entry name" value="Put_MntP"/>
</dbReference>
<dbReference type="NCBIfam" id="NF008546">
    <property type="entry name" value="PRK11469.1"/>
    <property type="match status" value="1"/>
</dbReference>
<dbReference type="PANTHER" id="PTHR35529">
    <property type="entry name" value="MANGANESE EFFLUX PUMP MNTP-RELATED"/>
    <property type="match status" value="1"/>
</dbReference>
<dbReference type="PANTHER" id="PTHR35529:SF1">
    <property type="entry name" value="MANGANESE EFFLUX PUMP MNTP-RELATED"/>
    <property type="match status" value="1"/>
</dbReference>
<dbReference type="Pfam" id="PF02659">
    <property type="entry name" value="Mntp"/>
    <property type="match status" value="1"/>
</dbReference>
<organism>
    <name type="scientific">Escherichia coli O1:K1 / APEC</name>
    <dbReference type="NCBI Taxonomy" id="405955"/>
    <lineage>
        <taxon>Bacteria</taxon>
        <taxon>Pseudomonadati</taxon>
        <taxon>Pseudomonadota</taxon>
        <taxon>Gammaproteobacteria</taxon>
        <taxon>Enterobacterales</taxon>
        <taxon>Enterobacteriaceae</taxon>
        <taxon>Escherichia</taxon>
    </lineage>
</organism>
<proteinExistence type="inferred from homology"/>
<evidence type="ECO:0000255" key="1">
    <source>
        <dbReference type="HAMAP-Rule" id="MF_01521"/>
    </source>
</evidence>
<evidence type="ECO:0000305" key="2"/>
<accession>A1ABY9</accession>
<name>MNTP_ECOK1</name>
<protein>
    <recommendedName>
        <fullName evidence="1">Probable manganese efflux pump MntP</fullName>
    </recommendedName>
</protein>
<sequence length="188" mass="20117">MNITATVLLAFGMSMDAFAASIGKGATLHKPKFSEALRTGLIFGAVETLTPLIGWGMGMLASRFVLEWNHWIAFVLLIFLGGRMIIEGFRGADDEDEEPRRRHGFWLLVTTAIATSLDAMAVGVGLAFLQVNIIATALAIGCATLIMSTLGMMVGRFIGSIIGKKAEILGGLVLIGIGVQILWTHFHG</sequence>
<reference key="1">
    <citation type="journal article" date="2007" name="J. Bacteriol.">
        <title>The genome sequence of avian pathogenic Escherichia coli strain O1:K1:H7 shares strong similarities with human extraintestinal pathogenic E. coli genomes.</title>
        <authorList>
            <person name="Johnson T.J."/>
            <person name="Kariyawasam S."/>
            <person name="Wannemuehler Y."/>
            <person name="Mangiamele P."/>
            <person name="Johnson S.J."/>
            <person name="Doetkott C."/>
            <person name="Skyberg J.A."/>
            <person name="Lynne A.M."/>
            <person name="Johnson J.R."/>
            <person name="Nolan L.K."/>
        </authorList>
    </citation>
    <scope>NUCLEOTIDE SEQUENCE [LARGE SCALE GENOMIC DNA]</scope>
</reference>
<gene>
    <name evidence="1" type="primary">mntP</name>
    <name type="synonym">yebN</name>
    <name type="ordered locus">Ecok1_16850</name>
    <name type="ORF">APECO1_878</name>
</gene>
<keyword id="KW-0997">Cell inner membrane</keyword>
<keyword id="KW-1003">Cell membrane</keyword>
<keyword id="KW-0406">Ion transport</keyword>
<keyword id="KW-0464">Manganese</keyword>
<keyword id="KW-0472">Membrane</keyword>
<keyword id="KW-1185">Reference proteome</keyword>
<keyword id="KW-0812">Transmembrane</keyword>
<keyword id="KW-1133">Transmembrane helix</keyword>
<keyword id="KW-0813">Transport</keyword>
<feature type="chain" id="PRO_0000292535" description="Probable manganese efflux pump MntP">
    <location>
        <begin position="1"/>
        <end position="188"/>
    </location>
</feature>
<feature type="transmembrane region" description="Helical" evidence="1">
    <location>
        <begin position="3"/>
        <end position="23"/>
    </location>
</feature>
<feature type="transmembrane region" description="Helical" evidence="1">
    <location>
        <begin position="66"/>
        <end position="86"/>
    </location>
</feature>
<feature type="transmembrane region" description="Helical" evidence="1">
    <location>
        <begin position="106"/>
        <end position="128"/>
    </location>
</feature>
<feature type="transmembrane region" description="Helical" evidence="1">
    <location>
        <begin position="143"/>
        <end position="163"/>
    </location>
</feature>
<feature type="transmembrane region" description="Helical" evidence="1">
    <location>
        <begin position="168"/>
        <end position="188"/>
    </location>
</feature>